<proteinExistence type="inferred from homology"/>
<protein>
    <recommendedName>
        <fullName>Pheromone-processing carboxypeptidase KEX1</fullName>
        <ecNumber>3.4.16.6</ecNumber>
    </recommendedName>
    <alternativeName>
        <fullName>Carboxypeptidase D</fullName>
    </alternativeName>
</protein>
<name>KEX1_PHANO</name>
<comment type="function">
    <text evidence="1">Protease with a carboxypeptidase B-like function involved in the C-terminal processing of the lysine and arginine residues from protein precursors. Promotes cell fusion and is involved in the programmed cell death (By similarity).</text>
</comment>
<comment type="catalytic activity">
    <reaction>
        <text>Preferential release of a C-terminal arginine or lysine residue.</text>
        <dbReference type="EC" id="3.4.16.6"/>
    </reaction>
</comment>
<comment type="subcellular location">
    <subcellularLocation>
        <location evidence="1">Golgi apparatus</location>
        <location evidence="1">trans-Golgi network membrane</location>
        <topology evidence="1">Single-pass type I membrane protein</topology>
    </subcellularLocation>
</comment>
<comment type="similarity">
    <text evidence="5">Belongs to the peptidase S10 family.</text>
</comment>
<dbReference type="EC" id="3.4.16.6"/>
<dbReference type="EMBL" id="CH445331">
    <property type="protein sequence ID" value="EAT87535.1"/>
    <property type="molecule type" value="Genomic_DNA"/>
</dbReference>
<dbReference type="RefSeq" id="XP_001795554.1">
    <property type="nucleotide sequence ID" value="XM_001795502.1"/>
</dbReference>
<dbReference type="SMR" id="Q0USX0"/>
<dbReference type="FunCoup" id="Q0USX0">
    <property type="interactions" value="100"/>
</dbReference>
<dbReference type="STRING" id="321614.Q0USX0"/>
<dbReference type="ESTHER" id="phano-kex1">
    <property type="family name" value="Carboxypeptidase_S10"/>
</dbReference>
<dbReference type="MEROPS" id="S10.007"/>
<dbReference type="GlyCosmos" id="Q0USX0">
    <property type="glycosylation" value="5 sites, No reported glycans"/>
</dbReference>
<dbReference type="EnsemblFungi" id="SNOT_05144">
    <property type="protein sequence ID" value="SNOT_05144"/>
    <property type="gene ID" value="SNOG_05144"/>
</dbReference>
<dbReference type="GeneID" id="5972429"/>
<dbReference type="KEGG" id="pno:SNOG_05144"/>
<dbReference type="VEuPathDB" id="FungiDB:JI435_051440"/>
<dbReference type="eggNOG" id="KOG1282">
    <property type="taxonomic scope" value="Eukaryota"/>
</dbReference>
<dbReference type="HOGENOM" id="CLU_008523_11_0_1"/>
<dbReference type="InParanoid" id="Q0USX0"/>
<dbReference type="OMA" id="EMADQFV"/>
<dbReference type="OrthoDB" id="443318at2759"/>
<dbReference type="Proteomes" id="UP000001055">
    <property type="component" value="Unassembled WGS sequence"/>
</dbReference>
<dbReference type="GO" id="GO:0016020">
    <property type="term" value="C:membrane"/>
    <property type="evidence" value="ECO:0007669"/>
    <property type="project" value="UniProtKB-KW"/>
</dbReference>
<dbReference type="GO" id="GO:0005802">
    <property type="term" value="C:trans-Golgi network"/>
    <property type="evidence" value="ECO:0000318"/>
    <property type="project" value="GO_Central"/>
</dbReference>
<dbReference type="GO" id="GO:0004185">
    <property type="term" value="F:serine-type carboxypeptidase activity"/>
    <property type="evidence" value="ECO:0000318"/>
    <property type="project" value="GO_Central"/>
</dbReference>
<dbReference type="GO" id="GO:0006915">
    <property type="term" value="P:apoptotic process"/>
    <property type="evidence" value="ECO:0007669"/>
    <property type="project" value="UniProtKB-KW"/>
</dbReference>
<dbReference type="GO" id="GO:0006508">
    <property type="term" value="P:proteolysis"/>
    <property type="evidence" value="ECO:0007669"/>
    <property type="project" value="UniProtKB-KW"/>
</dbReference>
<dbReference type="FunFam" id="3.40.50.1820:FF:000121">
    <property type="entry name" value="Carboxypeptidase D"/>
    <property type="match status" value="1"/>
</dbReference>
<dbReference type="Gene3D" id="3.40.50.1820">
    <property type="entry name" value="alpha/beta hydrolase"/>
    <property type="match status" value="1"/>
</dbReference>
<dbReference type="InterPro" id="IPR029058">
    <property type="entry name" value="AB_hydrolase_fold"/>
</dbReference>
<dbReference type="InterPro" id="IPR001563">
    <property type="entry name" value="Peptidase_S10"/>
</dbReference>
<dbReference type="InterPro" id="IPR018202">
    <property type="entry name" value="Ser_caboxypep_ser_AS"/>
</dbReference>
<dbReference type="PANTHER" id="PTHR11802:SF190">
    <property type="entry name" value="PHEROMONE-PROCESSING CARBOXYPEPTIDASE KEX1"/>
    <property type="match status" value="1"/>
</dbReference>
<dbReference type="PANTHER" id="PTHR11802">
    <property type="entry name" value="SERINE PROTEASE FAMILY S10 SERINE CARBOXYPEPTIDASE"/>
    <property type="match status" value="1"/>
</dbReference>
<dbReference type="Pfam" id="PF00450">
    <property type="entry name" value="Peptidase_S10"/>
    <property type="match status" value="1"/>
</dbReference>
<dbReference type="PRINTS" id="PR00724">
    <property type="entry name" value="CRBOXYPTASEC"/>
</dbReference>
<dbReference type="SUPFAM" id="SSF53474">
    <property type="entry name" value="alpha/beta-Hydrolases"/>
    <property type="match status" value="1"/>
</dbReference>
<dbReference type="PROSITE" id="PS00131">
    <property type="entry name" value="CARBOXYPEPT_SER_SER"/>
    <property type="match status" value="1"/>
</dbReference>
<keyword id="KW-0053">Apoptosis</keyword>
<keyword id="KW-0121">Carboxypeptidase</keyword>
<keyword id="KW-0325">Glycoprotein</keyword>
<keyword id="KW-0333">Golgi apparatus</keyword>
<keyword id="KW-0378">Hydrolase</keyword>
<keyword id="KW-0472">Membrane</keyword>
<keyword id="KW-0645">Protease</keyword>
<keyword id="KW-0732">Signal</keyword>
<keyword id="KW-0812">Transmembrane</keyword>
<keyword id="KW-1133">Transmembrane helix</keyword>
<accession>Q0USX0</accession>
<organism>
    <name type="scientific">Phaeosphaeria nodorum (strain SN15 / ATCC MYA-4574 / FGSC 10173)</name>
    <name type="common">Glume blotch fungus</name>
    <name type="synonym">Parastagonospora nodorum</name>
    <dbReference type="NCBI Taxonomy" id="321614"/>
    <lineage>
        <taxon>Eukaryota</taxon>
        <taxon>Fungi</taxon>
        <taxon>Dikarya</taxon>
        <taxon>Ascomycota</taxon>
        <taxon>Pezizomycotina</taxon>
        <taxon>Dothideomycetes</taxon>
        <taxon>Pleosporomycetidae</taxon>
        <taxon>Pleosporales</taxon>
        <taxon>Pleosporineae</taxon>
        <taxon>Phaeosphaeriaceae</taxon>
        <taxon>Parastagonospora</taxon>
    </lineage>
</organism>
<evidence type="ECO:0000250" key="1"/>
<evidence type="ECO:0000255" key="2"/>
<evidence type="ECO:0000255" key="3">
    <source>
        <dbReference type="PROSITE-ProRule" id="PRU10074"/>
    </source>
</evidence>
<evidence type="ECO:0000256" key="4">
    <source>
        <dbReference type="SAM" id="MobiDB-lite"/>
    </source>
</evidence>
<evidence type="ECO:0000305" key="5"/>
<feature type="signal peptide" evidence="2">
    <location>
        <begin position="1"/>
        <end position="30"/>
    </location>
</feature>
<feature type="chain" id="PRO_0000411935" description="Pheromone-processing carboxypeptidase KEX1">
    <location>
        <begin position="31"/>
        <end position="642"/>
    </location>
</feature>
<feature type="topological domain" description="Lumenal" evidence="2">
    <location>
        <begin position="31"/>
        <end position="519"/>
    </location>
</feature>
<feature type="transmembrane region" description="Helical" evidence="2">
    <location>
        <begin position="520"/>
        <end position="540"/>
    </location>
</feature>
<feature type="topological domain" description="Cytoplasmic" evidence="2">
    <location>
        <begin position="541"/>
        <end position="642"/>
    </location>
</feature>
<feature type="region of interest" description="Disordered" evidence="4">
    <location>
        <begin position="476"/>
        <end position="500"/>
    </location>
</feature>
<feature type="region of interest" description="Disordered" evidence="4">
    <location>
        <begin position="586"/>
        <end position="642"/>
    </location>
</feature>
<feature type="compositionally biased region" description="Basic and acidic residues" evidence="4">
    <location>
        <begin position="632"/>
        <end position="642"/>
    </location>
</feature>
<feature type="active site" evidence="3">
    <location>
        <position position="184"/>
    </location>
</feature>
<feature type="active site" evidence="3">
    <location>
        <position position="386"/>
    </location>
</feature>
<feature type="active site" evidence="3">
    <location>
        <position position="448"/>
    </location>
</feature>
<feature type="glycosylation site" description="N-linked (GlcNAc...) asparagine" evidence="2">
    <location>
        <position position="120"/>
    </location>
</feature>
<feature type="glycosylation site" description="N-linked (GlcNAc...) asparagine" evidence="2">
    <location>
        <position position="400"/>
    </location>
</feature>
<feature type="glycosylation site" description="N-linked (GlcNAc...) asparagine" evidence="2">
    <location>
        <position position="437"/>
    </location>
</feature>
<feature type="glycosylation site" description="N-linked (GlcNAc...) asparagine" evidence="2">
    <location>
        <position position="445"/>
    </location>
</feature>
<feature type="glycosylation site" description="N-linked (GlcNAc...) asparagine" evidence="2">
    <location>
        <position position="497"/>
    </location>
</feature>
<sequence>MLLTHTSSRWRTAAVCALAATASWLPSVQAAEKTQADYFVSSLPGAPEGPLLKMHAGHIEVDAEHNSNLFFWHYENRHIADRQRTVLWLNGGPGCSSMDGAMMEIGPYRVKHGGHLEYNNGSWDEFANMLFIDQPVGTGFSYVNTDSYLTDLDQMAEHMMIFLEKWFKLFPEYENDDLYIAGESYAGQHIPYIARAILNRNKNQNTDPKPWNLKGLLIGNGWISPADQYLAYLPFAYQNGMIQADSDSAKRVEQQQSICIQKLQDGGHDKVDTSECEQIMVAILEETKDRKADRMNQCLNMYDIRLRDDSSCGMNWPPDLTDVTPYLRRPDVIKALHINSDKKTGWSECNGAVSGHFRAKNSVPTVKFLPELLTEVPILLFSGDKDFICNHVGTEAMIENMSWNGGKGWEVSPGVWAPKQDWTFEGEPAGTYQEVRNLTYVVFYNSSHMVPFDYPKRTRDMLDRFMNVDISAIGGDPADSRIDGEKGPLTSVGDHPNSTKAEEDKAQQLKEAEWKAYYRSGEVVLVILIIVACLWGAFLWRTRRSTSLYKGVDGDEGRESLLTGMGLDNFRRGARRHDVEAADFDERELDDLDDAPKKPANGYSNVNSEKERQPHNDSTFSLGADSDDEAEGSERGRRKEHS</sequence>
<reference key="1">
    <citation type="journal article" date="2007" name="Plant Cell">
        <title>Dothideomycete-plant interactions illuminated by genome sequencing and EST analysis of the wheat pathogen Stagonospora nodorum.</title>
        <authorList>
            <person name="Hane J.K."/>
            <person name="Lowe R.G.T."/>
            <person name="Solomon P.S."/>
            <person name="Tan K.-C."/>
            <person name="Schoch C.L."/>
            <person name="Spatafora J.W."/>
            <person name="Crous P.W."/>
            <person name="Kodira C.D."/>
            <person name="Birren B.W."/>
            <person name="Galagan J.E."/>
            <person name="Torriani S.F.F."/>
            <person name="McDonald B.A."/>
            <person name="Oliver R.P."/>
        </authorList>
    </citation>
    <scope>NUCLEOTIDE SEQUENCE [LARGE SCALE GENOMIC DNA]</scope>
    <source>
        <strain>SN15 / ATCC MYA-4574 / FGSC 10173</strain>
    </source>
</reference>
<gene>
    <name type="primary">KEX1</name>
    <name type="ORF">SNOG_05144</name>
</gene>